<sequence>MIINNVKLVLENEVVSGSLEVQNGEIRAFAESQSRLPEAMDGEGGWLLPGLIELHTDNLDKFFTPRPKVDWPAHSAMSSHDALMVASGITTVLDAVAIGDVRDGGDRLENLEKMINAIEETQKRGVNRAEHRLHLRCELPHHTTLPLFEKLVQREPVTLVSLMDHSPGQRQFANREKYREYYQGKYSLTDAQMQQYEEEQLALAARWSQPNRESIAALCRARKIALASHDDATHAHVAESHQLGSVIAEFPTTFEAAEASRKHGMNVLMGAPNIVRGGSHSGNVAASELAQLGLLDILSSDYYPASLLDAAFRVADDQSNRFTLPQAVKLVTKNPAQALNLQDRGVIGEGKRADLVLAHRKDNHIHIDHVWRQGKRVF</sequence>
<protein>
    <recommendedName>
        <fullName>Alpha-D-ribose 1-methylphosphonate 5-triphosphate diphosphatase</fullName>
        <shortName>RPnTP diphosphatase</shortName>
        <ecNumber>3.6.1.63</ecNumber>
    </recommendedName>
</protein>
<dbReference type="EC" id="3.6.1.63"/>
<dbReference type="EMBL" id="J05260">
    <property type="protein sequence ID" value="AAA24352.1"/>
    <property type="molecule type" value="Genomic_DNA"/>
</dbReference>
<dbReference type="EMBL" id="D90227">
    <property type="protein sequence ID" value="BAA14273.1"/>
    <property type="molecule type" value="Genomic_DNA"/>
</dbReference>
<dbReference type="EMBL" id="U14003">
    <property type="protein sequence ID" value="AAA96994.1"/>
    <property type="molecule type" value="Genomic_DNA"/>
</dbReference>
<dbReference type="EMBL" id="U00096">
    <property type="protein sequence ID" value="AAC77056.1"/>
    <property type="molecule type" value="Genomic_DNA"/>
</dbReference>
<dbReference type="EMBL" id="AP009048">
    <property type="protein sequence ID" value="BAE78098.1"/>
    <property type="molecule type" value="Genomic_DNA"/>
</dbReference>
<dbReference type="PIR" id="S56323">
    <property type="entry name" value="S56323"/>
</dbReference>
<dbReference type="RefSeq" id="NP_418519.1">
    <property type="nucleotide sequence ID" value="NC_000913.3"/>
</dbReference>
<dbReference type="RefSeq" id="WP_000586325.1">
    <property type="nucleotide sequence ID" value="NZ_SSZK01000016.1"/>
</dbReference>
<dbReference type="SMR" id="P16689"/>
<dbReference type="BioGRID" id="4262021">
    <property type="interactions" value="12"/>
</dbReference>
<dbReference type="FunCoup" id="P16689">
    <property type="interactions" value="46"/>
</dbReference>
<dbReference type="STRING" id="511145.b4095"/>
<dbReference type="PaxDb" id="511145-b4095"/>
<dbReference type="EnsemblBacteria" id="AAC77056">
    <property type="protein sequence ID" value="AAC77056"/>
    <property type="gene ID" value="b4095"/>
</dbReference>
<dbReference type="GeneID" id="948613"/>
<dbReference type="KEGG" id="ecj:JW4056"/>
<dbReference type="KEGG" id="eco:b4095"/>
<dbReference type="KEGG" id="ecoc:C3026_22135"/>
<dbReference type="PATRIC" id="fig|1411691.4.peg.2605"/>
<dbReference type="EchoBASE" id="EB0716"/>
<dbReference type="eggNOG" id="COG3454">
    <property type="taxonomic scope" value="Bacteria"/>
</dbReference>
<dbReference type="HOGENOM" id="CLU_060303_1_0_6"/>
<dbReference type="InParanoid" id="P16689"/>
<dbReference type="OMA" id="MSLMDHT"/>
<dbReference type="OrthoDB" id="9785413at2"/>
<dbReference type="PhylomeDB" id="P16689"/>
<dbReference type="BioCyc" id="EcoCyc:EG10722-MONOMER"/>
<dbReference type="BioCyc" id="MetaCyc:EG10722-MONOMER"/>
<dbReference type="SABIO-RK" id="P16689"/>
<dbReference type="PRO" id="PR:P16689"/>
<dbReference type="Proteomes" id="UP000000625">
    <property type="component" value="Chromosome"/>
</dbReference>
<dbReference type="GO" id="GO:0016810">
    <property type="term" value="F:hydrolase activity, acting on carbon-nitrogen (but not peptide) bonds"/>
    <property type="evidence" value="ECO:0007669"/>
    <property type="project" value="InterPro"/>
</dbReference>
<dbReference type="GO" id="GO:0019700">
    <property type="term" value="P:organic phosphonate catabolic process"/>
    <property type="evidence" value="ECO:0000315"/>
    <property type="project" value="EcoCyc"/>
</dbReference>
<dbReference type="CDD" id="cd01306">
    <property type="entry name" value="PhnM"/>
    <property type="match status" value="1"/>
</dbReference>
<dbReference type="FunFam" id="3.20.20.140:FF:000075">
    <property type="entry name" value="Phosphonate metabolism protein PhnM"/>
    <property type="match status" value="1"/>
</dbReference>
<dbReference type="Gene3D" id="3.20.20.140">
    <property type="entry name" value="Metal-dependent hydrolases"/>
    <property type="match status" value="2"/>
</dbReference>
<dbReference type="InterPro" id="IPR013108">
    <property type="entry name" value="Amidohydro_3"/>
</dbReference>
<dbReference type="InterPro" id="IPR011059">
    <property type="entry name" value="Metal-dep_hydrolase_composite"/>
</dbReference>
<dbReference type="InterPro" id="IPR032466">
    <property type="entry name" value="Metal_Hydrolase"/>
</dbReference>
<dbReference type="InterPro" id="IPR051781">
    <property type="entry name" value="Metallo-dep_Hydrolase"/>
</dbReference>
<dbReference type="InterPro" id="IPR012696">
    <property type="entry name" value="PhnM"/>
</dbReference>
<dbReference type="NCBIfam" id="TIGR02318">
    <property type="entry name" value="phosphono_phnM"/>
    <property type="match status" value="1"/>
</dbReference>
<dbReference type="NCBIfam" id="NF011981">
    <property type="entry name" value="PRK15446.1-2"/>
    <property type="match status" value="1"/>
</dbReference>
<dbReference type="NCBIfam" id="NF011984">
    <property type="entry name" value="PRK15446.1-5"/>
    <property type="match status" value="1"/>
</dbReference>
<dbReference type="NCBIfam" id="NF011987">
    <property type="entry name" value="PRK15446.2-3"/>
    <property type="match status" value="1"/>
</dbReference>
<dbReference type="NCBIfam" id="NF011990">
    <property type="entry name" value="PRK15446.2-6"/>
    <property type="match status" value="1"/>
</dbReference>
<dbReference type="PANTHER" id="PTHR43135">
    <property type="entry name" value="ALPHA-D-RIBOSE 1-METHYLPHOSPHONATE 5-TRIPHOSPHATE DIPHOSPHATASE"/>
    <property type="match status" value="1"/>
</dbReference>
<dbReference type="PANTHER" id="PTHR43135:SF3">
    <property type="entry name" value="ALPHA-D-RIBOSE 1-METHYLPHOSPHONATE 5-TRIPHOSPHATE DIPHOSPHATASE"/>
    <property type="match status" value="1"/>
</dbReference>
<dbReference type="Pfam" id="PF07969">
    <property type="entry name" value="Amidohydro_3"/>
    <property type="match status" value="1"/>
</dbReference>
<dbReference type="PIRSF" id="PIRSF038971">
    <property type="entry name" value="PhnM"/>
    <property type="match status" value="1"/>
</dbReference>
<dbReference type="SUPFAM" id="SSF51338">
    <property type="entry name" value="Composite domain of metallo-dependent hydrolases"/>
    <property type="match status" value="1"/>
</dbReference>
<dbReference type="SUPFAM" id="SSF51556">
    <property type="entry name" value="Metallo-dependent hydrolases"/>
    <property type="match status" value="1"/>
</dbReference>
<evidence type="ECO:0000269" key="1">
    <source>
    </source>
</evidence>
<evidence type="ECO:0000305" key="2"/>
<proteinExistence type="evidence at protein level"/>
<reference key="1">
    <citation type="journal article" date="1990" name="J. Biol. Chem.">
        <title>Molecular biology of carbon-phosphorus bond cleavage. Cloning and sequencing of the phn (psiD) genes involved in alkylphosphonate uptake and C-P lyase activity in Escherichia coli B.</title>
        <authorList>
            <person name="Chen C.-M."/>
            <person name="Ye Q.-Z."/>
            <person name="Zhu Z."/>
            <person name="Wanner B.L."/>
            <person name="Walsh C.T."/>
        </authorList>
    </citation>
    <scope>NUCLEOTIDE SEQUENCE [GENOMIC DNA]</scope>
    <source>
        <strain>B</strain>
    </source>
</reference>
<reference key="2">
    <citation type="journal article" date="1991" name="J. Bacteriol.">
        <title>Molecular analysis of the cryptic and functional phn operons for phosphonate use in Escherichia coli K-12.</title>
        <authorList>
            <person name="Makino K."/>
            <person name="Kim S.K."/>
            <person name="Shinagawa H."/>
            <person name="Amemura M."/>
            <person name="Nakata A."/>
        </authorList>
    </citation>
    <scope>NUCLEOTIDE SEQUENCE [GENOMIC DNA]</scope>
    <source>
        <strain>K12</strain>
    </source>
</reference>
<reference key="3">
    <citation type="journal article" date="1995" name="Nucleic Acids Res.">
        <title>Analysis of the Escherichia coli genome VI: DNA sequence of the region from 92.8 through 100 minutes.</title>
        <authorList>
            <person name="Burland V.D."/>
            <person name="Plunkett G. III"/>
            <person name="Sofia H.J."/>
            <person name="Daniels D.L."/>
            <person name="Blattner F.R."/>
        </authorList>
    </citation>
    <scope>NUCLEOTIDE SEQUENCE [LARGE SCALE GENOMIC DNA]</scope>
    <source>
        <strain>K12 / MG1655 / ATCC 47076</strain>
    </source>
</reference>
<reference key="4">
    <citation type="journal article" date="1997" name="Science">
        <title>The complete genome sequence of Escherichia coli K-12.</title>
        <authorList>
            <person name="Blattner F.R."/>
            <person name="Plunkett G. III"/>
            <person name="Bloch C.A."/>
            <person name="Perna N.T."/>
            <person name="Burland V."/>
            <person name="Riley M."/>
            <person name="Collado-Vides J."/>
            <person name="Glasner J.D."/>
            <person name="Rode C.K."/>
            <person name="Mayhew G.F."/>
            <person name="Gregor J."/>
            <person name="Davis N.W."/>
            <person name="Kirkpatrick H.A."/>
            <person name="Goeden M.A."/>
            <person name="Rose D.J."/>
            <person name="Mau B."/>
            <person name="Shao Y."/>
        </authorList>
    </citation>
    <scope>NUCLEOTIDE SEQUENCE [LARGE SCALE GENOMIC DNA]</scope>
    <source>
        <strain>K12 / MG1655 / ATCC 47076</strain>
    </source>
</reference>
<reference key="5">
    <citation type="journal article" date="2006" name="Mol. Syst. Biol.">
        <title>Highly accurate genome sequences of Escherichia coli K-12 strains MG1655 and W3110.</title>
        <authorList>
            <person name="Hayashi K."/>
            <person name="Morooka N."/>
            <person name="Yamamoto Y."/>
            <person name="Fujita K."/>
            <person name="Isono K."/>
            <person name="Choi S."/>
            <person name="Ohtsubo E."/>
            <person name="Baba T."/>
            <person name="Wanner B.L."/>
            <person name="Mori H."/>
            <person name="Horiuchi T."/>
        </authorList>
    </citation>
    <scope>NUCLEOTIDE SEQUENCE [LARGE SCALE GENOMIC DNA]</scope>
    <source>
        <strain>K12 / W3110 / ATCC 27325 / DSM 5911</strain>
    </source>
</reference>
<reference key="6">
    <citation type="journal article" date="2011" name="Nature">
        <title>Intermediates in the transformation of phosphonates to phosphate by bacteria.</title>
        <authorList>
            <person name="Kamat S.S."/>
            <person name="Williams H.J."/>
            <person name="Raushel F.M."/>
        </authorList>
    </citation>
    <scope>FUNCTION</scope>
    <scope>CATALYTIC ACTIVITY</scope>
    <scope>BIOPHYSICOCHEMICAL PROPERTIES</scope>
    <source>
        <strain>K12</strain>
    </source>
</reference>
<keyword id="KW-0378">Hydrolase</keyword>
<keyword id="KW-1185">Reference proteome</keyword>
<feature type="chain" id="PRO_0000058399" description="Alpha-D-ribose 1-methylphosphonate 5-triphosphate diphosphatase">
    <location>
        <begin position="1"/>
        <end position="378"/>
    </location>
</feature>
<feature type="sequence variant" description="In strain: B.">
    <original>Q</original>
    <variation>E</variation>
    <location>
        <position position="318"/>
    </location>
</feature>
<accession>P16689</accession>
<accession>Q2M6K8</accession>
<organism>
    <name type="scientific">Escherichia coli (strain K12)</name>
    <dbReference type="NCBI Taxonomy" id="83333"/>
    <lineage>
        <taxon>Bacteria</taxon>
        <taxon>Pseudomonadati</taxon>
        <taxon>Pseudomonadota</taxon>
        <taxon>Gammaproteobacteria</taxon>
        <taxon>Enterobacterales</taxon>
        <taxon>Enterobacteriaceae</taxon>
        <taxon>Escherichia</taxon>
    </lineage>
</organism>
<gene>
    <name type="primary">phnM</name>
    <name type="ordered locus">b4095</name>
    <name type="ordered locus">JW4056</name>
</gene>
<name>PHNM_ECOLI</name>
<comment type="function">
    <text evidence="1">Catalyzes the hydrolysis of alpha-D-ribose 1-methylphosphonate triphosphate (RPnTP) to form alpha-D-ribose 1-methylphosphonate phosphate (PRPn) and diphosphate.</text>
</comment>
<comment type="catalytic activity">
    <reaction evidence="1">
        <text>alpha-D-ribose 1-methylphosphonate 5-triphosphate + H2O = alpha-D-ribose 1-methylphosphonate 5-phosphate + diphosphate + H(+)</text>
        <dbReference type="Rhea" id="RHEA:34683"/>
        <dbReference type="ChEBI" id="CHEBI:15377"/>
        <dbReference type="ChEBI" id="CHEBI:15378"/>
        <dbReference type="ChEBI" id="CHEBI:33019"/>
        <dbReference type="ChEBI" id="CHEBI:68686"/>
        <dbReference type="ChEBI" id="CHEBI:68823"/>
        <dbReference type="EC" id="3.6.1.63"/>
    </reaction>
</comment>
<comment type="biophysicochemical properties">
    <kinetics>
        <KM evidence="1">56 uM for alpha-D-ribose 1-methylphosphonate 5-triphosphate</KM>
        <KM evidence="1">98 uM for D-ribose-5-triphosphate</KM>
        <KM evidence="1">200 uM for D-ribose-5-diphosphate</KM>
    </kinetics>
</comment>
<comment type="miscellaneous">
    <text>The sequence shown is that of strain K12.</text>
</comment>
<comment type="similarity">
    <text evidence="2">Belongs to the metallo-dependent hydrolases superfamily.</text>
</comment>